<proteinExistence type="evidence at protein level"/>
<name>VM27B_VIPBB</name>
<evidence type="ECO:0000250" key="1">
    <source>
        <dbReference type="UniProtKB" id="Q805F6"/>
    </source>
</evidence>
<evidence type="ECO:0000255" key="2">
    <source>
        <dbReference type="PROSITE-ProRule" id="PRU00068"/>
    </source>
</evidence>
<evidence type="ECO:0000269" key="3">
    <source>
    </source>
</evidence>
<evidence type="ECO:0000303" key="4">
    <source>
    </source>
</evidence>
<evidence type="ECO:0000305" key="5"/>
<evidence type="ECO:0000305" key="6">
    <source>
    </source>
</evidence>
<keyword id="KW-1217">Cell adhesion impairing toxin</keyword>
<keyword id="KW-0903">Direct protein sequencing</keyword>
<keyword id="KW-1015">Disulfide bond</keyword>
<keyword id="KW-1199">Hemostasis impairing toxin</keyword>
<keyword id="KW-1201">Platelet aggregation inhibiting toxin</keyword>
<keyword id="KW-0964">Secreted</keyword>
<keyword id="KW-0800">Toxin</keyword>
<comment type="function">
    <text evidence="3">Poor inhibitor of platelet aggregation. The disintegrin inhibits the adhesion of cells expressing the RGD-dependent integrin alpha-5/beta-1 (ITGA5/ITGB1) to immobilized fibronectin. Inhibition on alpha-IIb/beta-3 (ITGA2B/ITGB3) is low.</text>
</comment>
<comment type="subunit">
    <text evidence="3">Heterodimer with VB7A; disulfide-linked.</text>
</comment>
<comment type="subcellular location">
    <subcellularLocation>
        <location evidence="3">Secreted</location>
    </subcellularLocation>
</comment>
<comment type="tissue specificity">
    <text evidence="6">Expressed by the venom gland.</text>
</comment>
<comment type="miscellaneous">
    <text evidence="6">Negative results: does not show inhibition on alpha-1/beta-1 (ITGA1/ITGB1), alpha-2/beta-1 (ITGA2/ITGB1) and alpha-6/beta-1 (ITGA6/ITGB1).</text>
</comment>
<comment type="miscellaneous">
    <text>The disintegrin belongs to the dimeric disintegrin subfamily.</text>
</comment>
<comment type="similarity">
    <text evidence="5">Belongs to the venom metalloproteinase (M12B) family. P-II subfamily. P-IIe sub-subfamily.</text>
</comment>
<sequence length="64" mass="6998">ELLQNSGNPCCDPVTCKPREGEHCISGPCCRNCKFKRAGTVCLDAKGDWMNNYCTGISSDCPRN</sequence>
<accession>P0C6A7</accession>
<protein>
    <recommendedName>
        <fullName evidence="4">Disintegrin VB7B</fullName>
    </recommendedName>
</protein>
<organism>
    <name type="scientific">Vipera berus berus</name>
    <name type="common">Common viper</name>
    <dbReference type="NCBI Taxonomy" id="31156"/>
    <lineage>
        <taxon>Eukaryota</taxon>
        <taxon>Metazoa</taxon>
        <taxon>Chordata</taxon>
        <taxon>Craniata</taxon>
        <taxon>Vertebrata</taxon>
        <taxon>Euteleostomi</taxon>
        <taxon>Lepidosauria</taxon>
        <taxon>Squamata</taxon>
        <taxon>Bifurcata</taxon>
        <taxon>Unidentata</taxon>
        <taxon>Episquamata</taxon>
        <taxon>Toxicofera</taxon>
        <taxon>Serpentes</taxon>
        <taxon>Colubroidea</taxon>
        <taxon>Viperidae</taxon>
        <taxon>Viperinae</taxon>
        <taxon>Vipera</taxon>
    </lineage>
</organism>
<feature type="chain" id="PRO_0000319022" description="Disintegrin VB7B" evidence="3">
    <location>
        <begin position="1"/>
        <end position="64"/>
    </location>
</feature>
<feature type="domain" description="Disintegrin" evidence="2">
    <location>
        <begin position="1"/>
        <end position="64"/>
    </location>
</feature>
<feature type="short sequence motif" description="Cell attachment site; atypical (KGD)">
    <location>
        <begin position="46"/>
        <end position="48"/>
    </location>
</feature>
<feature type="disulfide bond" evidence="1">
    <location>
        <begin position="10"/>
        <end position="33"/>
    </location>
</feature>
<feature type="disulfide bond" description="Interchain (with C-7 in VB7A)" evidence="1">
    <location>
        <position position="11"/>
    </location>
</feature>
<feature type="disulfide bond" description="Interchain (with C-12 in VB7A)" evidence="1">
    <location>
        <position position="16"/>
    </location>
</feature>
<feature type="disulfide bond" evidence="1">
    <location>
        <begin position="24"/>
        <end position="30"/>
    </location>
</feature>
<feature type="disulfide bond" evidence="1">
    <location>
        <begin position="29"/>
        <end position="54"/>
    </location>
</feature>
<feature type="disulfide bond" evidence="1 2">
    <location>
        <begin position="42"/>
        <end position="61"/>
    </location>
</feature>
<dbReference type="SMR" id="P0C6A7"/>
<dbReference type="GO" id="GO:0005576">
    <property type="term" value="C:extracellular region"/>
    <property type="evidence" value="ECO:0007669"/>
    <property type="project" value="UniProtKB-SubCell"/>
</dbReference>
<dbReference type="GO" id="GO:0090729">
    <property type="term" value="F:toxin activity"/>
    <property type="evidence" value="ECO:0007669"/>
    <property type="project" value="UniProtKB-KW"/>
</dbReference>
<dbReference type="Gene3D" id="4.10.70.10">
    <property type="entry name" value="Disintegrin domain"/>
    <property type="match status" value="1"/>
</dbReference>
<dbReference type="InterPro" id="IPR001762">
    <property type="entry name" value="Disintegrin_dom"/>
</dbReference>
<dbReference type="InterPro" id="IPR036436">
    <property type="entry name" value="Disintegrin_dom_sf"/>
</dbReference>
<dbReference type="PANTHER" id="PTHR11905">
    <property type="entry name" value="ADAM A DISINTEGRIN AND METALLOPROTEASE DOMAIN"/>
    <property type="match status" value="1"/>
</dbReference>
<dbReference type="PANTHER" id="PTHR11905:SF159">
    <property type="entry name" value="ADAM METALLOPROTEASE"/>
    <property type="match status" value="1"/>
</dbReference>
<dbReference type="Pfam" id="PF00200">
    <property type="entry name" value="Disintegrin"/>
    <property type="match status" value="1"/>
</dbReference>
<dbReference type="PRINTS" id="PR00289">
    <property type="entry name" value="DISINTEGRIN"/>
</dbReference>
<dbReference type="SMART" id="SM00050">
    <property type="entry name" value="DISIN"/>
    <property type="match status" value="1"/>
</dbReference>
<dbReference type="SUPFAM" id="SSF57552">
    <property type="entry name" value="Blood coagulation inhibitor (disintegrin)"/>
    <property type="match status" value="1"/>
</dbReference>
<dbReference type="PROSITE" id="PS50214">
    <property type="entry name" value="DISINTEGRIN_2"/>
    <property type="match status" value="1"/>
</dbReference>
<reference key="1">
    <citation type="journal article" date="2003" name="Biochem. J.">
        <title>Snake venom disintegrins: novel dimeric disintegrins and structural diversification by disulphide bond engineering.</title>
        <authorList>
            <person name="Calvete J.J."/>
            <person name="Moreno-Murciano M.P."/>
            <person name="Theakston R.D.G."/>
            <person name="Kisiel D.G."/>
            <person name="Marcinkiewicz C."/>
        </authorList>
    </citation>
    <scope>PROTEIN SEQUENCE</scope>
    <scope>FUNCTION</scope>
    <scope>SUBUNIT</scope>
    <scope>SUBCELLULAR LOCATION</scope>
    <source>
        <tissue>Venom</tissue>
    </source>
</reference>